<organism>
    <name type="scientific">Myxococcus xanthus (strain DK1622)</name>
    <dbReference type="NCBI Taxonomy" id="246197"/>
    <lineage>
        <taxon>Bacteria</taxon>
        <taxon>Pseudomonadati</taxon>
        <taxon>Myxococcota</taxon>
        <taxon>Myxococcia</taxon>
        <taxon>Myxococcales</taxon>
        <taxon>Cystobacterineae</taxon>
        <taxon>Myxococcaceae</taxon>
        <taxon>Myxococcus</taxon>
    </lineage>
</organism>
<sequence length="72" mass="8166">MSPLAFVISLPIRFYRKFLGPLLPKVCRFHPSCSTYAMEALEKHGGLKGSWLTLWRLVRCQPFHPGGIDPVP</sequence>
<keyword id="KW-0997">Cell inner membrane</keyword>
<keyword id="KW-1003">Cell membrane</keyword>
<keyword id="KW-0472">Membrane</keyword>
<keyword id="KW-1185">Reference proteome</keyword>
<evidence type="ECO:0000255" key="1">
    <source>
        <dbReference type="HAMAP-Rule" id="MF_00386"/>
    </source>
</evidence>
<protein>
    <recommendedName>
        <fullName evidence="1">Putative membrane protein insertion efficiency factor</fullName>
    </recommendedName>
</protein>
<reference key="1">
    <citation type="journal article" date="2006" name="Proc. Natl. Acad. Sci. U.S.A.">
        <title>Evolution of sensory complexity recorded in a myxobacterial genome.</title>
        <authorList>
            <person name="Goldman B.S."/>
            <person name="Nierman W.C."/>
            <person name="Kaiser D."/>
            <person name="Slater S.C."/>
            <person name="Durkin A.S."/>
            <person name="Eisen J.A."/>
            <person name="Ronning C.M."/>
            <person name="Barbazuk W.B."/>
            <person name="Blanchard M."/>
            <person name="Field C."/>
            <person name="Halling C."/>
            <person name="Hinkle G."/>
            <person name="Iartchuk O."/>
            <person name="Kim H.S."/>
            <person name="Mackenzie C."/>
            <person name="Madupu R."/>
            <person name="Miller N."/>
            <person name="Shvartsbeyn A."/>
            <person name="Sullivan S.A."/>
            <person name="Vaudin M."/>
            <person name="Wiegand R."/>
            <person name="Kaplan H.B."/>
        </authorList>
    </citation>
    <scope>NUCLEOTIDE SEQUENCE [LARGE SCALE GENOMIC DNA]</scope>
    <source>
        <strain>DK1622</strain>
    </source>
</reference>
<comment type="function">
    <text evidence="1">Could be involved in insertion of integral membrane proteins into the membrane.</text>
</comment>
<comment type="subcellular location">
    <subcellularLocation>
        <location evidence="1">Cell inner membrane</location>
        <topology evidence="1">Peripheral membrane protein</topology>
        <orientation evidence="1">Cytoplasmic side</orientation>
    </subcellularLocation>
</comment>
<comment type="similarity">
    <text evidence="1">Belongs to the UPF0161 family.</text>
</comment>
<name>YIDD_MYXXD</name>
<gene>
    <name type="ordered locus">MXAN_7510</name>
</gene>
<accession>Q1CVG0</accession>
<dbReference type="EMBL" id="CP000113">
    <property type="protein sequence ID" value="ABF89292.1"/>
    <property type="molecule type" value="Genomic_DNA"/>
</dbReference>
<dbReference type="SMR" id="Q1CVG0"/>
<dbReference type="STRING" id="246197.MXAN_7510"/>
<dbReference type="EnsemblBacteria" id="ABF89292">
    <property type="protein sequence ID" value="ABF89292"/>
    <property type="gene ID" value="MXAN_7510"/>
</dbReference>
<dbReference type="GeneID" id="41364643"/>
<dbReference type="KEGG" id="mxa:MXAN_7510"/>
<dbReference type="eggNOG" id="COG0759">
    <property type="taxonomic scope" value="Bacteria"/>
</dbReference>
<dbReference type="HOGENOM" id="CLU_144811_6_0_7"/>
<dbReference type="OrthoDB" id="9801753at2"/>
<dbReference type="Proteomes" id="UP000002402">
    <property type="component" value="Chromosome"/>
</dbReference>
<dbReference type="GO" id="GO:0005886">
    <property type="term" value="C:plasma membrane"/>
    <property type="evidence" value="ECO:0007669"/>
    <property type="project" value="UniProtKB-SubCell"/>
</dbReference>
<dbReference type="HAMAP" id="MF_00386">
    <property type="entry name" value="UPF0161_YidD"/>
    <property type="match status" value="1"/>
</dbReference>
<dbReference type="InterPro" id="IPR002696">
    <property type="entry name" value="Membr_insert_effic_factor_YidD"/>
</dbReference>
<dbReference type="NCBIfam" id="TIGR00278">
    <property type="entry name" value="membrane protein insertion efficiency factor YidD"/>
    <property type="match status" value="1"/>
</dbReference>
<dbReference type="PANTHER" id="PTHR33383">
    <property type="entry name" value="MEMBRANE PROTEIN INSERTION EFFICIENCY FACTOR-RELATED"/>
    <property type="match status" value="1"/>
</dbReference>
<dbReference type="PANTHER" id="PTHR33383:SF1">
    <property type="entry name" value="MEMBRANE PROTEIN INSERTION EFFICIENCY FACTOR-RELATED"/>
    <property type="match status" value="1"/>
</dbReference>
<dbReference type="Pfam" id="PF01809">
    <property type="entry name" value="YidD"/>
    <property type="match status" value="1"/>
</dbReference>
<dbReference type="SMART" id="SM01234">
    <property type="entry name" value="Haemolytic"/>
    <property type="match status" value="1"/>
</dbReference>
<proteinExistence type="inferred from homology"/>
<feature type="chain" id="PRO_0000253128" description="Putative membrane protein insertion efficiency factor">
    <location>
        <begin position="1"/>
        <end position="72"/>
    </location>
</feature>